<name>SYT_ECO24</name>
<feature type="chain" id="PRO_1000058424" description="Threonine--tRNA ligase">
    <location>
        <begin position="1"/>
        <end position="642"/>
    </location>
</feature>
<feature type="domain" description="TGS" evidence="2">
    <location>
        <begin position="1"/>
        <end position="61"/>
    </location>
</feature>
<feature type="region of interest" description="Catalytic" evidence="1">
    <location>
        <begin position="243"/>
        <end position="534"/>
    </location>
</feature>
<feature type="binding site" evidence="1">
    <location>
        <position position="334"/>
    </location>
    <ligand>
        <name>Zn(2+)</name>
        <dbReference type="ChEBI" id="CHEBI:29105"/>
    </ligand>
</feature>
<feature type="binding site" evidence="1">
    <location>
        <position position="385"/>
    </location>
    <ligand>
        <name>Zn(2+)</name>
        <dbReference type="ChEBI" id="CHEBI:29105"/>
    </ligand>
</feature>
<feature type="binding site" evidence="1">
    <location>
        <position position="511"/>
    </location>
    <ligand>
        <name>Zn(2+)</name>
        <dbReference type="ChEBI" id="CHEBI:29105"/>
    </ligand>
</feature>
<feature type="modified residue" description="N6-acetyllysine" evidence="1">
    <location>
        <position position="286"/>
    </location>
</feature>
<protein>
    <recommendedName>
        <fullName evidence="1">Threonine--tRNA ligase</fullName>
        <ecNumber evidence="1">6.1.1.3</ecNumber>
    </recommendedName>
    <alternativeName>
        <fullName evidence="1">Threonyl-tRNA synthetase</fullName>
        <shortName evidence="1">ThrRS</shortName>
    </alternativeName>
</protein>
<accession>A7ZMI6</accession>
<comment type="function">
    <text evidence="1">Catalyzes the attachment of threonine to tRNA(Thr) in a two-step reaction: L-threonine is first activated by ATP to form Thr-AMP and then transferred to the acceptor end of tRNA(Thr). Also edits incorrectly charged L-seryl-tRNA(Thr).</text>
</comment>
<comment type="catalytic activity">
    <reaction evidence="1">
        <text>tRNA(Thr) + L-threonine + ATP = L-threonyl-tRNA(Thr) + AMP + diphosphate + H(+)</text>
        <dbReference type="Rhea" id="RHEA:24624"/>
        <dbReference type="Rhea" id="RHEA-COMP:9670"/>
        <dbReference type="Rhea" id="RHEA-COMP:9704"/>
        <dbReference type="ChEBI" id="CHEBI:15378"/>
        <dbReference type="ChEBI" id="CHEBI:30616"/>
        <dbReference type="ChEBI" id="CHEBI:33019"/>
        <dbReference type="ChEBI" id="CHEBI:57926"/>
        <dbReference type="ChEBI" id="CHEBI:78442"/>
        <dbReference type="ChEBI" id="CHEBI:78534"/>
        <dbReference type="ChEBI" id="CHEBI:456215"/>
        <dbReference type="EC" id="6.1.1.3"/>
    </reaction>
</comment>
<comment type="cofactor">
    <cofactor evidence="1">
        <name>Zn(2+)</name>
        <dbReference type="ChEBI" id="CHEBI:29105"/>
    </cofactor>
    <text evidence="1">Binds 1 zinc ion per subunit.</text>
</comment>
<comment type="subunit">
    <text evidence="1">Homodimer.</text>
</comment>
<comment type="subcellular location">
    <subcellularLocation>
        <location evidence="1">Cytoplasm</location>
    </subcellularLocation>
</comment>
<comment type="similarity">
    <text evidence="1">Belongs to the class-II aminoacyl-tRNA synthetase family.</text>
</comment>
<dbReference type="EC" id="6.1.1.3" evidence="1"/>
<dbReference type="EMBL" id="CP000800">
    <property type="protein sequence ID" value="ABV19864.1"/>
    <property type="molecule type" value="Genomic_DNA"/>
</dbReference>
<dbReference type="RefSeq" id="WP_001144190.1">
    <property type="nucleotide sequence ID" value="NC_009801.1"/>
</dbReference>
<dbReference type="SMR" id="A7ZMI6"/>
<dbReference type="GeneID" id="75205636"/>
<dbReference type="KEGG" id="ecw:EcE24377A_1937"/>
<dbReference type="HOGENOM" id="CLU_008554_0_1_6"/>
<dbReference type="Proteomes" id="UP000001122">
    <property type="component" value="Chromosome"/>
</dbReference>
<dbReference type="GO" id="GO:0005829">
    <property type="term" value="C:cytosol"/>
    <property type="evidence" value="ECO:0007669"/>
    <property type="project" value="TreeGrafter"/>
</dbReference>
<dbReference type="GO" id="GO:0005524">
    <property type="term" value="F:ATP binding"/>
    <property type="evidence" value="ECO:0007669"/>
    <property type="project" value="UniProtKB-UniRule"/>
</dbReference>
<dbReference type="GO" id="GO:0046872">
    <property type="term" value="F:metal ion binding"/>
    <property type="evidence" value="ECO:0007669"/>
    <property type="project" value="UniProtKB-KW"/>
</dbReference>
<dbReference type="GO" id="GO:0004829">
    <property type="term" value="F:threonine-tRNA ligase activity"/>
    <property type="evidence" value="ECO:0007669"/>
    <property type="project" value="UniProtKB-UniRule"/>
</dbReference>
<dbReference type="GO" id="GO:0000049">
    <property type="term" value="F:tRNA binding"/>
    <property type="evidence" value="ECO:0007669"/>
    <property type="project" value="UniProtKB-KW"/>
</dbReference>
<dbReference type="GO" id="GO:0006435">
    <property type="term" value="P:threonyl-tRNA aminoacylation"/>
    <property type="evidence" value="ECO:0007669"/>
    <property type="project" value="UniProtKB-UniRule"/>
</dbReference>
<dbReference type="CDD" id="cd01667">
    <property type="entry name" value="TGS_ThrRS"/>
    <property type="match status" value="1"/>
</dbReference>
<dbReference type="CDD" id="cd00860">
    <property type="entry name" value="ThrRS_anticodon"/>
    <property type="match status" value="1"/>
</dbReference>
<dbReference type="CDD" id="cd00771">
    <property type="entry name" value="ThrRS_core"/>
    <property type="match status" value="1"/>
</dbReference>
<dbReference type="FunFam" id="3.10.20.30:FF:000005">
    <property type="entry name" value="Threonine--tRNA ligase"/>
    <property type="match status" value="1"/>
</dbReference>
<dbReference type="FunFam" id="3.30.54.20:FF:000002">
    <property type="entry name" value="Threonine--tRNA ligase"/>
    <property type="match status" value="1"/>
</dbReference>
<dbReference type="FunFam" id="3.30.930.10:FF:000002">
    <property type="entry name" value="Threonine--tRNA ligase"/>
    <property type="match status" value="1"/>
</dbReference>
<dbReference type="FunFam" id="3.40.50.800:FF:000001">
    <property type="entry name" value="Threonine--tRNA ligase"/>
    <property type="match status" value="1"/>
</dbReference>
<dbReference type="FunFam" id="3.30.980.10:FF:000005">
    <property type="entry name" value="Threonyl-tRNA synthetase, mitochondrial"/>
    <property type="match status" value="1"/>
</dbReference>
<dbReference type="Gene3D" id="3.10.20.30">
    <property type="match status" value="1"/>
</dbReference>
<dbReference type="Gene3D" id="3.30.54.20">
    <property type="match status" value="1"/>
</dbReference>
<dbReference type="Gene3D" id="3.40.50.800">
    <property type="entry name" value="Anticodon-binding domain"/>
    <property type="match status" value="1"/>
</dbReference>
<dbReference type="Gene3D" id="3.30.930.10">
    <property type="entry name" value="Bira Bifunctional Protein, Domain 2"/>
    <property type="match status" value="1"/>
</dbReference>
<dbReference type="Gene3D" id="3.30.980.10">
    <property type="entry name" value="Threonyl-trna Synthetase, Chain A, domain 2"/>
    <property type="match status" value="1"/>
</dbReference>
<dbReference type="HAMAP" id="MF_00184">
    <property type="entry name" value="Thr_tRNA_synth"/>
    <property type="match status" value="1"/>
</dbReference>
<dbReference type="InterPro" id="IPR002314">
    <property type="entry name" value="aa-tRNA-synt_IIb"/>
</dbReference>
<dbReference type="InterPro" id="IPR006195">
    <property type="entry name" value="aa-tRNA-synth_II"/>
</dbReference>
<dbReference type="InterPro" id="IPR045864">
    <property type="entry name" value="aa-tRNA-synth_II/BPL/LPL"/>
</dbReference>
<dbReference type="InterPro" id="IPR004154">
    <property type="entry name" value="Anticodon-bd"/>
</dbReference>
<dbReference type="InterPro" id="IPR036621">
    <property type="entry name" value="Anticodon-bd_dom_sf"/>
</dbReference>
<dbReference type="InterPro" id="IPR012675">
    <property type="entry name" value="Beta-grasp_dom_sf"/>
</dbReference>
<dbReference type="InterPro" id="IPR004095">
    <property type="entry name" value="TGS"/>
</dbReference>
<dbReference type="InterPro" id="IPR012676">
    <property type="entry name" value="TGS-like"/>
</dbReference>
<dbReference type="InterPro" id="IPR002320">
    <property type="entry name" value="Thr-tRNA-ligase_IIa"/>
</dbReference>
<dbReference type="InterPro" id="IPR018163">
    <property type="entry name" value="Thr/Ala-tRNA-synth_IIc_edit"/>
</dbReference>
<dbReference type="InterPro" id="IPR047246">
    <property type="entry name" value="ThrRS_anticodon"/>
</dbReference>
<dbReference type="InterPro" id="IPR033728">
    <property type="entry name" value="ThrRS_core"/>
</dbReference>
<dbReference type="InterPro" id="IPR012947">
    <property type="entry name" value="tRNA_SAD"/>
</dbReference>
<dbReference type="NCBIfam" id="TIGR00418">
    <property type="entry name" value="thrS"/>
    <property type="match status" value="1"/>
</dbReference>
<dbReference type="PANTHER" id="PTHR11451:SF44">
    <property type="entry name" value="THREONINE--TRNA LIGASE, CHLOROPLASTIC_MITOCHONDRIAL 2"/>
    <property type="match status" value="1"/>
</dbReference>
<dbReference type="PANTHER" id="PTHR11451">
    <property type="entry name" value="THREONINE-TRNA LIGASE"/>
    <property type="match status" value="1"/>
</dbReference>
<dbReference type="Pfam" id="PF03129">
    <property type="entry name" value="HGTP_anticodon"/>
    <property type="match status" value="1"/>
</dbReference>
<dbReference type="Pfam" id="PF02824">
    <property type="entry name" value="TGS"/>
    <property type="match status" value="1"/>
</dbReference>
<dbReference type="Pfam" id="PF00587">
    <property type="entry name" value="tRNA-synt_2b"/>
    <property type="match status" value="1"/>
</dbReference>
<dbReference type="Pfam" id="PF07973">
    <property type="entry name" value="tRNA_SAD"/>
    <property type="match status" value="1"/>
</dbReference>
<dbReference type="PRINTS" id="PR01047">
    <property type="entry name" value="TRNASYNTHTHR"/>
</dbReference>
<dbReference type="SMART" id="SM00863">
    <property type="entry name" value="tRNA_SAD"/>
    <property type="match status" value="1"/>
</dbReference>
<dbReference type="SUPFAM" id="SSF52954">
    <property type="entry name" value="Class II aaRS ABD-related"/>
    <property type="match status" value="1"/>
</dbReference>
<dbReference type="SUPFAM" id="SSF55681">
    <property type="entry name" value="Class II aaRS and biotin synthetases"/>
    <property type="match status" value="1"/>
</dbReference>
<dbReference type="SUPFAM" id="SSF81271">
    <property type="entry name" value="TGS-like"/>
    <property type="match status" value="1"/>
</dbReference>
<dbReference type="SUPFAM" id="SSF55186">
    <property type="entry name" value="ThrRS/AlaRS common domain"/>
    <property type="match status" value="1"/>
</dbReference>
<dbReference type="PROSITE" id="PS50862">
    <property type="entry name" value="AA_TRNA_LIGASE_II"/>
    <property type="match status" value="1"/>
</dbReference>
<dbReference type="PROSITE" id="PS51880">
    <property type="entry name" value="TGS"/>
    <property type="match status" value="1"/>
</dbReference>
<evidence type="ECO:0000255" key="1">
    <source>
        <dbReference type="HAMAP-Rule" id="MF_00184"/>
    </source>
</evidence>
<evidence type="ECO:0000255" key="2">
    <source>
        <dbReference type="PROSITE-ProRule" id="PRU01228"/>
    </source>
</evidence>
<reference key="1">
    <citation type="journal article" date="2008" name="J. Bacteriol.">
        <title>The pangenome structure of Escherichia coli: comparative genomic analysis of E. coli commensal and pathogenic isolates.</title>
        <authorList>
            <person name="Rasko D.A."/>
            <person name="Rosovitz M.J."/>
            <person name="Myers G.S.A."/>
            <person name="Mongodin E.F."/>
            <person name="Fricke W.F."/>
            <person name="Gajer P."/>
            <person name="Crabtree J."/>
            <person name="Sebaihia M."/>
            <person name="Thomson N.R."/>
            <person name="Chaudhuri R."/>
            <person name="Henderson I.R."/>
            <person name="Sperandio V."/>
            <person name="Ravel J."/>
        </authorList>
    </citation>
    <scope>NUCLEOTIDE SEQUENCE [LARGE SCALE GENOMIC DNA]</scope>
    <source>
        <strain>E24377A / ETEC</strain>
    </source>
</reference>
<sequence length="642" mass="73986">MPVITLPDGSQRHYDHAVSPMDVALDIGPGLAKACIAGRVNGELVDACDLIENDAQLSIITAKDEDGLEIIRHSCAHLLGHAIKQLWPHTKMAIGPVIDNGFYYDVDLDRTLTQEDVEALEKRMHELAEKNYDVIKKKVSWHEARETFANRGESYKVSILDENIAHDDKPGLYFHEEYVDMCRGPHVPNMRFCHHFKLMKTAGAYWRGDSNNKMLQRIYGTAWADKKALNAYLQRLEEAAKRDHRKIGKQLDLYHMQEEAPGMVFWHNDGWTIFRELEVFVRSKLKEYQYQEVKGPFMMDRVLWEKTGHWDNYKDAMFTTSSENREYCIKPMNCPGHVQIFNQGLKSYRDLPLRMAEFGSCHRNEPSGSLHGLMRVRGFTQDDAHIFCTEEQIRDEVNGCIRLVYDMYSTFGFEKIVVKLSTRPEKRIGSDEMWDRAEADLAVALEENNIPFEYQLGEGAFYGPKIEFTLYDCLDRAWQCGTVQLDFSLPSRLSASYVGEDNERKVPVMIHRAILGSMERFIGILTEEFAGFFPTWLAPVQVVIMNITDSQSDYVNELTQKLSNAGIRVKADLRNEKIGFKIREHTLRRVPYMLVCGDKEVESGKVAVRTRRGKDLGSMDVNEVIEKLQQEIRSRSLKQLEE</sequence>
<organism>
    <name type="scientific">Escherichia coli O139:H28 (strain E24377A / ETEC)</name>
    <dbReference type="NCBI Taxonomy" id="331111"/>
    <lineage>
        <taxon>Bacteria</taxon>
        <taxon>Pseudomonadati</taxon>
        <taxon>Pseudomonadota</taxon>
        <taxon>Gammaproteobacteria</taxon>
        <taxon>Enterobacterales</taxon>
        <taxon>Enterobacteriaceae</taxon>
        <taxon>Escherichia</taxon>
    </lineage>
</organism>
<keyword id="KW-0007">Acetylation</keyword>
<keyword id="KW-0030">Aminoacyl-tRNA synthetase</keyword>
<keyword id="KW-0067">ATP-binding</keyword>
<keyword id="KW-0963">Cytoplasm</keyword>
<keyword id="KW-0436">Ligase</keyword>
<keyword id="KW-0479">Metal-binding</keyword>
<keyword id="KW-0547">Nucleotide-binding</keyword>
<keyword id="KW-0648">Protein biosynthesis</keyword>
<keyword id="KW-1185">Reference proteome</keyword>
<keyword id="KW-0694">RNA-binding</keyword>
<keyword id="KW-0820">tRNA-binding</keyword>
<keyword id="KW-0862">Zinc</keyword>
<gene>
    <name evidence="1" type="primary">thrS</name>
    <name type="ordered locus">EcE24377A_1937</name>
</gene>
<proteinExistence type="inferred from homology"/>